<reference key="1">
    <citation type="journal article" date="2008" name="J. Bacteriol.">
        <title>The pangenome structure of Escherichia coli: comparative genomic analysis of E. coli commensal and pathogenic isolates.</title>
        <authorList>
            <person name="Rasko D.A."/>
            <person name="Rosovitz M.J."/>
            <person name="Myers G.S.A."/>
            <person name="Mongodin E.F."/>
            <person name="Fricke W.F."/>
            <person name="Gajer P."/>
            <person name="Crabtree J."/>
            <person name="Sebaihia M."/>
            <person name="Thomson N.R."/>
            <person name="Chaudhuri R."/>
            <person name="Henderson I.R."/>
            <person name="Sperandio V."/>
            <person name="Ravel J."/>
        </authorList>
    </citation>
    <scope>NUCLEOTIDE SEQUENCE [LARGE SCALE GENOMIC DNA]</scope>
    <source>
        <strain>E24377A / ETEC</strain>
    </source>
</reference>
<gene>
    <name evidence="1" type="primary">sfsA</name>
    <name type="ordered locus">EcE24377A_0150</name>
</gene>
<organism>
    <name type="scientific">Escherichia coli O139:H28 (strain E24377A / ETEC)</name>
    <dbReference type="NCBI Taxonomy" id="331111"/>
    <lineage>
        <taxon>Bacteria</taxon>
        <taxon>Pseudomonadati</taxon>
        <taxon>Pseudomonadota</taxon>
        <taxon>Gammaproteobacteria</taxon>
        <taxon>Enterobacterales</taxon>
        <taxon>Enterobacteriaceae</taxon>
        <taxon>Escherichia</taxon>
    </lineage>
</organism>
<name>SFSA_ECO24</name>
<comment type="function">
    <text evidence="1">Binds to DNA non-specifically. Could be a regulatory factor involved in maltose metabolism.</text>
</comment>
<comment type="similarity">
    <text evidence="1">Belongs to the SfsA family.</text>
</comment>
<proteinExistence type="inferred from homology"/>
<feature type="chain" id="PRO_1000057628" description="Sugar fermentation stimulation protein A">
    <location>
        <begin position="1"/>
        <end position="234"/>
    </location>
</feature>
<feature type="DNA-binding region" description="H-T-H motif" evidence="1">
    <location>
        <begin position="201"/>
        <end position="220"/>
    </location>
</feature>
<sequence length="234" mass="26229">MEFSPPLQRATLIQRYKRFLADVITPDGRELTLHCPNTGAMTGCATPGDTVWYSTSDNTKRKYPHTWELTQSQSGAFICVNTLWANRLTKEAILNESISELSGYSSLKSEVKYGAERSRIDFMLQADSRPDCYIEVKSVTLAENEQGYFPDAVTERGQKHLRELMSVAAEGQRAVIFFAVLHSAITRFSPARHIDEKYAQLLSEAQQRGVEILAYKAEISAEGMALKKSLPVTL</sequence>
<keyword id="KW-0238">DNA-binding</keyword>
<keyword id="KW-1185">Reference proteome</keyword>
<protein>
    <recommendedName>
        <fullName evidence="1">Sugar fermentation stimulation protein A</fullName>
    </recommendedName>
</protein>
<accession>A7ZHN7</accession>
<evidence type="ECO:0000255" key="1">
    <source>
        <dbReference type="HAMAP-Rule" id="MF_00095"/>
    </source>
</evidence>
<dbReference type="EMBL" id="CP000800">
    <property type="protein sequence ID" value="ABV18365.1"/>
    <property type="molecule type" value="Genomic_DNA"/>
</dbReference>
<dbReference type="RefSeq" id="WP_000396036.1">
    <property type="nucleotide sequence ID" value="NC_009801.1"/>
</dbReference>
<dbReference type="SMR" id="A7ZHN7"/>
<dbReference type="GeneID" id="75202039"/>
<dbReference type="KEGG" id="ecw:EcE24377A_0150"/>
<dbReference type="HOGENOM" id="CLU_052299_2_0_6"/>
<dbReference type="Proteomes" id="UP000001122">
    <property type="component" value="Chromosome"/>
</dbReference>
<dbReference type="GO" id="GO:0003677">
    <property type="term" value="F:DNA binding"/>
    <property type="evidence" value="ECO:0007669"/>
    <property type="project" value="UniProtKB-KW"/>
</dbReference>
<dbReference type="CDD" id="cd22359">
    <property type="entry name" value="SfsA-like_bacterial"/>
    <property type="match status" value="1"/>
</dbReference>
<dbReference type="FunFam" id="2.40.50.580:FF:000001">
    <property type="entry name" value="Sugar fermentation stimulation protein A"/>
    <property type="match status" value="1"/>
</dbReference>
<dbReference type="FunFam" id="3.40.1350.60:FF:000001">
    <property type="entry name" value="Sugar fermentation stimulation protein A"/>
    <property type="match status" value="1"/>
</dbReference>
<dbReference type="Gene3D" id="2.40.50.580">
    <property type="match status" value="1"/>
</dbReference>
<dbReference type="Gene3D" id="3.40.1350.60">
    <property type="match status" value="1"/>
</dbReference>
<dbReference type="HAMAP" id="MF_00095">
    <property type="entry name" value="SfsA"/>
    <property type="match status" value="1"/>
</dbReference>
<dbReference type="InterPro" id="IPR005224">
    <property type="entry name" value="SfsA"/>
</dbReference>
<dbReference type="InterPro" id="IPR040452">
    <property type="entry name" value="SfsA_C"/>
</dbReference>
<dbReference type="InterPro" id="IPR041465">
    <property type="entry name" value="SfsA_N"/>
</dbReference>
<dbReference type="NCBIfam" id="TIGR00230">
    <property type="entry name" value="sfsA"/>
    <property type="match status" value="1"/>
</dbReference>
<dbReference type="PANTHER" id="PTHR30545">
    <property type="entry name" value="SUGAR FERMENTATION STIMULATION PROTEIN A"/>
    <property type="match status" value="1"/>
</dbReference>
<dbReference type="PANTHER" id="PTHR30545:SF2">
    <property type="entry name" value="SUGAR FERMENTATION STIMULATION PROTEIN A"/>
    <property type="match status" value="1"/>
</dbReference>
<dbReference type="Pfam" id="PF03749">
    <property type="entry name" value="SfsA"/>
    <property type="match status" value="1"/>
</dbReference>
<dbReference type="Pfam" id="PF17746">
    <property type="entry name" value="SfsA_N"/>
    <property type="match status" value="1"/>
</dbReference>